<dbReference type="EMBL" id="AK041243">
    <property type="protein sequence ID" value="BAC30876.1"/>
    <property type="molecule type" value="mRNA"/>
</dbReference>
<dbReference type="EMBL" id="AK154484">
    <property type="protein sequence ID" value="BAE32619.1"/>
    <property type="molecule type" value="mRNA"/>
</dbReference>
<dbReference type="EMBL" id="AK171617">
    <property type="protein sequence ID" value="BAE42566.1"/>
    <property type="molecule type" value="mRNA"/>
</dbReference>
<dbReference type="EMBL" id="BC147338">
    <property type="protein sequence ID" value="AAI47339.1"/>
    <property type="molecule type" value="mRNA"/>
</dbReference>
<dbReference type="EMBL" id="BC147339">
    <property type="protein sequence ID" value="AAI47340.1"/>
    <property type="molecule type" value="mRNA"/>
</dbReference>
<dbReference type="EMBL" id="AK220411">
    <property type="protein sequence ID" value="BAD90261.1"/>
    <property type="molecule type" value="mRNA"/>
</dbReference>
<dbReference type="CCDS" id="CCDS39217.1"/>
<dbReference type="SMR" id="Q8BRV5"/>
<dbReference type="STRING" id="10090.ENSMUSP00000148442"/>
<dbReference type="iPTMnet" id="Q8BRV5"/>
<dbReference type="PaxDb" id="10090-ENSMUSP00000058789"/>
<dbReference type="PeptideAtlas" id="Q8BRV5"/>
<dbReference type="ProteomicsDB" id="269160"/>
<dbReference type="Antibodypedia" id="5419">
    <property type="antibodies" value="10 antibodies from 8 providers"/>
</dbReference>
<dbReference type="Ensembl" id="ENSMUST00000050125.9">
    <property type="protein sequence ID" value="ENSMUSP00000058789.9"/>
    <property type="gene ID" value="ENSMUSG00000051339.11"/>
</dbReference>
<dbReference type="GeneID" id="243219"/>
<dbReference type="KEGG" id="mmu:243219"/>
<dbReference type="UCSC" id="uc008yua.2">
    <property type="organism name" value="mouse"/>
</dbReference>
<dbReference type="AGR" id="MGI:1920194"/>
<dbReference type="MGI" id="MGI:1920194">
    <property type="gene designation" value="2900026A02Rik"/>
</dbReference>
<dbReference type="VEuPathDB" id="HostDB:ENSMUSG00000051339"/>
<dbReference type="eggNOG" id="ENOG502QWAQ">
    <property type="taxonomic scope" value="Eukaryota"/>
</dbReference>
<dbReference type="GeneTree" id="ENSGT00940000154184"/>
<dbReference type="HOGENOM" id="CLU_064320_0_0_1"/>
<dbReference type="InParanoid" id="Q8BRV5"/>
<dbReference type="OrthoDB" id="9950932at2759"/>
<dbReference type="PhylomeDB" id="Q8BRV5"/>
<dbReference type="BioGRID-ORCS" id="243219">
    <property type="hits" value="0 hits in 76 CRISPR screens"/>
</dbReference>
<dbReference type="ChiTaRS" id="2900026A02Rik">
    <property type="organism name" value="mouse"/>
</dbReference>
<dbReference type="PRO" id="PR:Q8BRV5"/>
<dbReference type="Proteomes" id="UP000000589">
    <property type="component" value="Chromosome 5"/>
</dbReference>
<dbReference type="RNAct" id="Q8BRV5">
    <property type="molecule type" value="protein"/>
</dbReference>
<dbReference type="Bgee" id="ENSMUSG00000051339">
    <property type="expression patterns" value="Expressed in otolith organ and 227 other cell types or tissues"/>
</dbReference>
<dbReference type="ExpressionAtlas" id="Q8BRV5">
    <property type="expression patterns" value="baseline and differential"/>
</dbReference>
<dbReference type="InterPro" id="IPR032764">
    <property type="entry name" value="Tankyrase-bd_C"/>
</dbReference>
<dbReference type="InterPro" id="IPR040006">
    <property type="entry name" value="TNKS1BP1-like"/>
</dbReference>
<dbReference type="PANTHER" id="PTHR22042:SF3">
    <property type="entry name" value="RIKEN CDNA 2900026A02 GENE"/>
    <property type="match status" value="1"/>
</dbReference>
<dbReference type="PANTHER" id="PTHR22042">
    <property type="entry name" value="TANKYRASE 1 BINDING PROTEIN"/>
    <property type="match status" value="1"/>
</dbReference>
<dbReference type="Pfam" id="PF15327">
    <property type="entry name" value="Tankyrase_bdg_C"/>
    <property type="match status" value="1"/>
</dbReference>
<dbReference type="SMART" id="SM01319">
    <property type="entry name" value="Tankyrase_bdg_C"/>
    <property type="match status" value="1"/>
</dbReference>
<organism>
    <name type="scientific">Mus musculus</name>
    <name type="common">Mouse</name>
    <dbReference type="NCBI Taxonomy" id="10090"/>
    <lineage>
        <taxon>Eukaryota</taxon>
        <taxon>Metazoa</taxon>
        <taxon>Chordata</taxon>
        <taxon>Craniata</taxon>
        <taxon>Vertebrata</taxon>
        <taxon>Euteleostomi</taxon>
        <taxon>Mammalia</taxon>
        <taxon>Eutheria</taxon>
        <taxon>Euarchontoglires</taxon>
        <taxon>Glires</taxon>
        <taxon>Rodentia</taxon>
        <taxon>Myomorpha</taxon>
        <taxon>Muroidea</taxon>
        <taxon>Muridae</taxon>
        <taxon>Murinae</taxon>
        <taxon>Mus</taxon>
        <taxon>Mus</taxon>
    </lineage>
</organism>
<sequence>MDYYYCPSLLKLLRYLWNQLKQCFSRRAPEAKDTDTLVQEADSQYGTWADQHQNGGSFGPESPSPDSSAASVGKQPPGSHLSSYTESTSVEQRDSSRDRRSSSVDRSSSELESTDGPEGPPPSDVCPAQEDDFSFIHQTSVLDSSALKTRVQLSKRSRRRAPISHSLRRSQFSESESRSPLEEESHSTWMFKDSTEEKSPRRDESDEEPPRVERTPVSHPQRMPVFPGMDPAVLKAQLPKRSEVDSPGDSLSWTPQPKSPKSPFHPGVLGSRVLPPSTEKEERSEECSPQWLKELKSKKRQSLYENQA</sequence>
<reference key="1">
    <citation type="journal article" date="2005" name="Science">
        <title>The transcriptional landscape of the mammalian genome.</title>
        <authorList>
            <person name="Carninci P."/>
            <person name="Kasukawa T."/>
            <person name="Katayama S."/>
            <person name="Gough J."/>
            <person name="Frith M.C."/>
            <person name="Maeda N."/>
            <person name="Oyama R."/>
            <person name="Ravasi T."/>
            <person name="Lenhard B."/>
            <person name="Wells C."/>
            <person name="Kodzius R."/>
            <person name="Shimokawa K."/>
            <person name="Bajic V.B."/>
            <person name="Brenner S.E."/>
            <person name="Batalov S."/>
            <person name="Forrest A.R."/>
            <person name="Zavolan M."/>
            <person name="Davis M.J."/>
            <person name="Wilming L.G."/>
            <person name="Aidinis V."/>
            <person name="Allen J.E."/>
            <person name="Ambesi-Impiombato A."/>
            <person name="Apweiler R."/>
            <person name="Aturaliya R.N."/>
            <person name="Bailey T.L."/>
            <person name="Bansal M."/>
            <person name="Baxter L."/>
            <person name="Beisel K.W."/>
            <person name="Bersano T."/>
            <person name="Bono H."/>
            <person name="Chalk A.M."/>
            <person name="Chiu K.P."/>
            <person name="Choudhary V."/>
            <person name="Christoffels A."/>
            <person name="Clutterbuck D.R."/>
            <person name="Crowe M.L."/>
            <person name="Dalla E."/>
            <person name="Dalrymple B.P."/>
            <person name="de Bono B."/>
            <person name="Della Gatta G."/>
            <person name="di Bernardo D."/>
            <person name="Down T."/>
            <person name="Engstrom P."/>
            <person name="Fagiolini M."/>
            <person name="Faulkner G."/>
            <person name="Fletcher C.F."/>
            <person name="Fukushima T."/>
            <person name="Furuno M."/>
            <person name="Futaki S."/>
            <person name="Gariboldi M."/>
            <person name="Georgii-Hemming P."/>
            <person name="Gingeras T.R."/>
            <person name="Gojobori T."/>
            <person name="Green R.E."/>
            <person name="Gustincich S."/>
            <person name="Harbers M."/>
            <person name="Hayashi Y."/>
            <person name="Hensch T.K."/>
            <person name="Hirokawa N."/>
            <person name="Hill D."/>
            <person name="Huminiecki L."/>
            <person name="Iacono M."/>
            <person name="Ikeo K."/>
            <person name="Iwama A."/>
            <person name="Ishikawa T."/>
            <person name="Jakt M."/>
            <person name="Kanapin A."/>
            <person name="Katoh M."/>
            <person name="Kawasawa Y."/>
            <person name="Kelso J."/>
            <person name="Kitamura H."/>
            <person name="Kitano H."/>
            <person name="Kollias G."/>
            <person name="Krishnan S.P."/>
            <person name="Kruger A."/>
            <person name="Kummerfeld S.K."/>
            <person name="Kurochkin I.V."/>
            <person name="Lareau L.F."/>
            <person name="Lazarevic D."/>
            <person name="Lipovich L."/>
            <person name="Liu J."/>
            <person name="Liuni S."/>
            <person name="McWilliam S."/>
            <person name="Madan Babu M."/>
            <person name="Madera M."/>
            <person name="Marchionni L."/>
            <person name="Matsuda H."/>
            <person name="Matsuzawa S."/>
            <person name="Miki H."/>
            <person name="Mignone F."/>
            <person name="Miyake S."/>
            <person name="Morris K."/>
            <person name="Mottagui-Tabar S."/>
            <person name="Mulder N."/>
            <person name="Nakano N."/>
            <person name="Nakauchi H."/>
            <person name="Ng P."/>
            <person name="Nilsson R."/>
            <person name="Nishiguchi S."/>
            <person name="Nishikawa S."/>
            <person name="Nori F."/>
            <person name="Ohara O."/>
            <person name="Okazaki Y."/>
            <person name="Orlando V."/>
            <person name="Pang K.C."/>
            <person name="Pavan W.J."/>
            <person name="Pavesi G."/>
            <person name="Pesole G."/>
            <person name="Petrovsky N."/>
            <person name="Piazza S."/>
            <person name="Reed J."/>
            <person name="Reid J.F."/>
            <person name="Ring B.Z."/>
            <person name="Ringwald M."/>
            <person name="Rost B."/>
            <person name="Ruan Y."/>
            <person name="Salzberg S.L."/>
            <person name="Sandelin A."/>
            <person name="Schneider C."/>
            <person name="Schoenbach C."/>
            <person name="Sekiguchi K."/>
            <person name="Semple C.A."/>
            <person name="Seno S."/>
            <person name="Sessa L."/>
            <person name="Sheng Y."/>
            <person name="Shibata Y."/>
            <person name="Shimada H."/>
            <person name="Shimada K."/>
            <person name="Silva D."/>
            <person name="Sinclair B."/>
            <person name="Sperling S."/>
            <person name="Stupka E."/>
            <person name="Sugiura K."/>
            <person name="Sultana R."/>
            <person name="Takenaka Y."/>
            <person name="Taki K."/>
            <person name="Tammoja K."/>
            <person name="Tan S.L."/>
            <person name="Tang S."/>
            <person name="Taylor M.S."/>
            <person name="Tegner J."/>
            <person name="Teichmann S.A."/>
            <person name="Ueda H.R."/>
            <person name="van Nimwegen E."/>
            <person name="Verardo R."/>
            <person name="Wei C.L."/>
            <person name="Yagi K."/>
            <person name="Yamanishi H."/>
            <person name="Zabarovsky E."/>
            <person name="Zhu S."/>
            <person name="Zimmer A."/>
            <person name="Hide W."/>
            <person name="Bult C."/>
            <person name="Grimmond S.M."/>
            <person name="Teasdale R.D."/>
            <person name="Liu E.T."/>
            <person name="Brusic V."/>
            <person name="Quackenbush J."/>
            <person name="Wahlestedt C."/>
            <person name="Mattick J.S."/>
            <person name="Hume D.A."/>
            <person name="Kai C."/>
            <person name="Sasaki D."/>
            <person name="Tomaru Y."/>
            <person name="Fukuda S."/>
            <person name="Kanamori-Katayama M."/>
            <person name="Suzuki M."/>
            <person name="Aoki J."/>
            <person name="Arakawa T."/>
            <person name="Iida J."/>
            <person name="Imamura K."/>
            <person name="Itoh M."/>
            <person name="Kato T."/>
            <person name="Kawaji H."/>
            <person name="Kawagashira N."/>
            <person name="Kawashima T."/>
            <person name="Kojima M."/>
            <person name="Kondo S."/>
            <person name="Konno H."/>
            <person name="Nakano K."/>
            <person name="Ninomiya N."/>
            <person name="Nishio T."/>
            <person name="Okada M."/>
            <person name="Plessy C."/>
            <person name="Shibata K."/>
            <person name="Shiraki T."/>
            <person name="Suzuki S."/>
            <person name="Tagami M."/>
            <person name="Waki K."/>
            <person name="Watahiki A."/>
            <person name="Okamura-Oho Y."/>
            <person name="Suzuki H."/>
            <person name="Kawai J."/>
            <person name="Hayashizaki Y."/>
        </authorList>
    </citation>
    <scope>NUCLEOTIDE SEQUENCE [LARGE SCALE MRNA]</scope>
    <source>
        <strain>C57BL/6J</strain>
        <strain>NOD</strain>
        <tissue>Aorta</tissue>
        <tissue>Vein</tissue>
    </source>
</reference>
<reference key="2">
    <citation type="journal article" date="2004" name="Genome Res.">
        <title>The status, quality, and expansion of the NIH full-length cDNA project: the Mammalian Gene Collection (MGC).</title>
        <authorList>
            <consortium name="The MGC Project Team"/>
        </authorList>
    </citation>
    <scope>NUCLEOTIDE SEQUENCE [LARGE SCALE MRNA]</scope>
    <source>
        <tissue>Brain</tissue>
    </source>
</reference>
<reference key="3">
    <citation type="submission" date="2005-02" db="EMBL/GenBank/DDBJ databases">
        <title>Prediction of the coding sequences of mouse homologues of KIAA gene. The complete nucleotide sequences of mouse KIAA-homologous cDNAs identified by screening of terminal sequences of cDNA clones randomly sampled from size-fractionated libraries.</title>
        <authorList>
            <person name="Okazaki N."/>
            <person name="Kikuno R.F."/>
            <person name="Ohara R."/>
            <person name="Inamoto S."/>
            <person name="Nagase T."/>
            <person name="Ohara O."/>
            <person name="Koga H."/>
        </authorList>
    </citation>
    <scope>NUCLEOTIDE SEQUENCE [LARGE SCALE MRNA] OF 118-308</scope>
    <source>
        <tissue>Fetal brain</tissue>
    </source>
</reference>
<proteinExistence type="evidence at transcript level"/>
<accession>Q8BRV5</accession>
<accession>B2RVT5</accession>
<accession>Q5DTV9</accession>
<keyword id="KW-0597">Phosphoprotein</keyword>
<keyword id="KW-1185">Reference proteome</keyword>
<feature type="chain" id="PRO_0000287146" description="Uncharacterized protein KIAA1671">
    <location>
        <begin position="1"/>
        <end position="308"/>
    </location>
</feature>
<feature type="region of interest" description="Disordered" evidence="2">
    <location>
        <begin position="43"/>
        <end position="289"/>
    </location>
</feature>
<feature type="compositionally biased region" description="Polar residues" evidence="2">
    <location>
        <begin position="43"/>
        <end position="55"/>
    </location>
</feature>
<feature type="compositionally biased region" description="Polar residues" evidence="2">
    <location>
        <begin position="80"/>
        <end position="90"/>
    </location>
</feature>
<feature type="compositionally biased region" description="Basic and acidic residues" evidence="2">
    <location>
        <begin position="91"/>
        <end position="109"/>
    </location>
</feature>
<feature type="compositionally biased region" description="Polar residues" evidence="2">
    <location>
        <begin position="136"/>
        <end position="152"/>
    </location>
</feature>
<feature type="compositionally biased region" description="Basic residues" evidence="2">
    <location>
        <begin position="153"/>
        <end position="168"/>
    </location>
</feature>
<feature type="compositionally biased region" description="Basic and acidic residues" evidence="2">
    <location>
        <begin position="175"/>
        <end position="186"/>
    </location>
</feature>
<feature type="compositionally biased region" description="Basic and acidic residues" evidence="2">
    <location>
        <begin position="193"/>
        <end position="216"/>
    </location>
</feature>
<feature type="modified residue" description="Phosphoserine" evidence="1">
    <location>
        <position position="62"/>
    </location>
</feature>
<feature type="modified residue" description="Phosphoserine" evidence="1">
    <location>
        <position position="166"/>
    </location>
</feature>
<feature type="modified residue" description="Phosphoserine" evidence="1">
    <location>
        <position position="205"/>
    </location>
</feature>
<feature type="modified residue" description="Phosphoserine" evidence="1">
    <location>
        <position position="259"/>
    </location>
</feature>
<feature type="modified residue" description="Phosphoserine" evidence="1">
    <location>
        <position position="262"/>
    </location>
</feature>
<feature type="modified residue" description="Phosphoserine" evidence="1">
    <location>
        <position position="288"/>
    </location>
</feature>
<evidence type="ECO:0000250" key="1">
    <source>
        <dbReference type="UniProtKB" id="Q9BY89"/>
    </source>
</evidence>
<evidence type="ECO:0000256" key="2">
    <source>
        <dbReference type="SAM" id="MobiDB-lite"/>
    </source>
</evidence>
<protein>
    <recommendedName>
        <fullName>Uncharacterized protein KIAA1671</fullName>
    </recommendedName>
</protein>
<name>K1671_MOUSE</name>
<gene>
    <name type="primary">Kiaa1671</name>
</gene>